<accession>O19015</accession>
<accession>O18898</accession>
<keyword id="KW-1015">Disulfide bond</keyword>
<keyword id="KW-0325">Glycoprotein</keyword>
<keyword id="KW-0326">Glycosidase</keyword>
<keyword id="KW-0378">Hydrolase</keyword>
<keyword id="KW-0458">Lysosome</keyword>
<keyword id="KW-1185">Reference proteome</keyword>
<keyword id="KW-0732">Signal</keyword>
<keyword id="KW-0865">Zymogen</keyword>
<dbReference type="EC" id="3.2.1.23" evidence="2"/>
<dbReference type="EMBL" id="AF006749">
    <property type="protein sequence ID" value="AAB81350.1"/>
    <property type="molecule type" value="mRNA"/>
</dbReference>
<dbReference type="EMBL" id="AF029974">
    <property type="protein sequence ID" value="AAB86405.1"/>
    <property type="molecule type" value="mRNA"/>
</dbReference>
<dbReference type="RefSeq" id="NP_001009860.1">
    <property type="nucleotide sequence ID" value="NM_001009860.1"/>
</dbReference>
<dbReference type="SMR" id="O19015"/>
<dbReference type="FunCoup" id="O19015">
    <property type="interactions" value="29"/>
</dbReference>
<dbReference type="STRING" id="9685.ENSFCAP00000019661"/>
<dbReference type="ChEMBL" id="CHEMBL2331052"/>
<dbReference type="CAZy" id="GH35">
    <property type="family name" value="Glycoside Hydrolase Family 35"/>
</dbReference>
<dbReference type="GlyCosmos" id="O19015">
    <property type="glycosylation" value="6 sites, No reported glycans"/>
</dbReference>
<dbReference type="PaxDb" id="9685-ENSFCAP00000019661"/>
<dbReference type="GeneID" id="493927"/>
<dbReference type="KEGG" id="fca:493927"/>
<dbReference type="CTD" id="2720"/>
<dbReference type="eggNOG" id="KOG0496">
    <property type="taxonomic scope" value="Eukaryota"/>
</dbReference>
<dbReference type="InParanoid" id="O19015"/>
<dbReference type="OrthoDB" id="1657402at2759"/>
<dbReference type="BRENDA" id="3.2.1.23">
    <property type="organism ID" value="2235"/>
</dbReference>
<dbReference type="PRO" id="PR:O19015"/>
<dbReference type="Proteomes" id="UP000011712">
    <property type="component" value="Unplaced"/>
</dbReference>
<dbReference type="GO" id="GO:0005764">
    <property type="term" value="C:lysosome"/>
    <property type="evidence" value="ECO:0007669"/>
    <property type="project" value="UniProtKB-SubCell"/>
</dbReference>
<dbReference type="GO" id="GO:0005773">
    <property type="term" value="C:vacuole"/>
    <property type="evidence" value="ECO:0000318"/>
    <property type="project" value="GO_Central"/>
</dbReference>
<dbReference type="GO" id="GO:0004565">
    <property type="term" value="F:beta-galactosidase activity"/>
    <property type="evidence" value="ECO:0000250"/>
    <property type="project" value="UniProtKB"/>
</dbReference>
<dbReference type="GO" id="GO:0019388">
    <property type="term" value="P:galactose catabolic process"/>
    <property type="evidence" value="ECO:0000318"/>
    <property type="project" value="GO_Central"/>
</dbReference>
<dbReference type="FunFam" id="2.60.120.260:FF:000115">
    <property type="entry name" value="Beta-galactosidase"/>
    <property type="match status" value="1"/>
</dbReference>
<dbReference type="FunFam" id="2.60.120.260:FF:000260">
    <property type="entry name" value="Beta-galactosidase"/>
    <property type="match status" value="1"/>
</dbReference>
<dbReference type="FunFam" id="3.20.20.80:FF:000017">
    <property type="entry name" value="Beta-galactosidase"/>
    <property type="match status" value="1"/>
</dbReference>
<dbReference type="Gene3D" id="2.60.120.260">
    <property type="entry name" value="Galactose-binding domain-like"/>
    <property type="match status" value="2"/>
</dbReference>
<dbReference type="Gene3D" id="3.20.20.80">
    <property type="entry name" value="Glycosidases"/>
    <property type="match status" value="1"/>
</dbReference>
<dbReference type="InterPro" id="IPR026283">
    <property type="entry name" value="B-gal_1-like"/>
</dbReference>
<dbReference type="InterPro" id="IPR048912">
    <property type="entry name" value="BetaGal1-like_ABD1"/>
</dbReference>
<dbReference type="InterPro" id="IPR048913">
    <property type="entry name" value="BetaGal_gal-bd"/>
</dbReference>
<dbReference type="InterPro" id="IPR008979">
    <property type="entry name" value="Galactose-bd-like_sf"/>
</dbReference>
<dbReference type="InterPro" id="IPR031330">
    <property type="entry name" value="Gly_Hdrlase_35_cat"/>
</dbReference>
<dbReference type="InterPro" id="IPR019801">
    <property type="entry name" value="Glyco_hydro_35_CS"/>
</dbReference>
<dbReference type="InterPro" id="IPR001944">
    <property type="entry name" value="Glycoside_Hdrlase_35"/>
</dbReference>
<dbReference type="InterPro" id="IPR017853">
    <property type="entry name" value="Glycoside_hydrolase_SF"/>
</dbReference>
<dbReference type="PANTHER" id="PTHR23421">
    <property type="entry name" value="BETA-GALACTOSIDASE RELATED"/>
    <property type="match status" value="1"/>
</dbReference>
<dbReference type="Pfam" id="PF21317">
    <property type="entry name" value="BetaGal_ABD_1"/>
    <property type="match status" value="1"/>
</dbReference>
<dbReference type="Pfam" id="PF21467">
    <property type="entry name" value="BetaGal_gal-bd"/>
    <property type="match status" value="1"/>
</dbReference>
<dbReference type="Pfam" id="PF01301">
    <property type="entry name" value="Glyco_hydro_35"/>
    <property type="match status" value="1"/>
</dbReference>
<dbReference type="PIRSF" id="PIRSF006336">
    <property type="entry name" value="B-gal"/>
    <property type="match status" value="1"/>
</dbReference>
<dbReference type="PRINTS" id="PR00742">
    <property type="entry name" value="GLHYDRLASE35"/>
</dbReference>
<dbReference type="SUPFAM" id="SSF51445">
    <property type="entry name" value="(Trans)glycosidases"/>
    <property type="match status" value="1"/>
</dbReference>
<dbReference type="SUPFAM" id="SSF49785">
    <property type="entry name" value="Galactose-binding domain-like"/>
    <property type="match status" value="1"/>
</dbReference>
<dbReference type="PROSITE" id="PS01182">
    <property type="entry name" value="GLYCOSYL_HYDROL_F35"/>
    <property type="match status" value="1"/>
</dbReference>
<evidence type="ECO:0000250" key="1"/>
<evidence type="ECO:0000250" key="2">
    <source>
        <dbReference type="UniProtKB" id="P16278"/>
    </source>
</evidence>
<evidence type="ECO:0000255" key="3"/>
<evidence type="ECO:0000256" key="4">
    <source>
        <dbReference type="SAM" id="MobiDB-lite"/>
    </source>
</evidence>
<evidence type="ECO:0000305" key="5"/>
<comment type="function">
    <text evidence="2">Cleaves beta-linked terminal galactosyl residues from gangliosides, glycoproteins, and glycosaminoglycans.</text>
</comment>
<comment type="catalytic activity">
    <reaction evidence="2">
        <text>Hydrolysis of terminal non-reducing beta-D-galactose residues in beta-D-galactosides.</text>
        <dbReference type="EC" id="3.2.1.23"/>
    </reaction>
</comment>
<comment type="subunit">
    <text evidence="2">Homodimer. May form higher multimers.</text>
</comment>
<comment type="subcellular location">
    <subcellularLocation>
        <location evidence="2">Lysosome</location>
    </subcellularLocation>
</comment>
<comment type="similarity">
    <text evidence="5">Belongs to the glycosyl hydrolase 35 family.</text>
</comment>
<organism>
    <name type="scientific">Felis catus</name>
    <name type="common">Cat</name>
    <name type="synonym">Felis silvestris catus</name>
    <dbReference type="NCBI Taxonomy" id="9685"/>
    <lineage>
        <taxon>Eukaryota</taxon>
        <taxon>Metazoa</taxon>
        <taxon>Chordata</taxon>
        <taxon>Craniata</taxon>
        <taxon>Vertebrata</taxon>
        <taxon>Euteleostomi</taxon>
        <taxon>Mammalia</taxon>
        <taxon>Eutheria</taxon>
        <taxon>Laurasiatheria</taxon>
        <taxon>Carnivora</taxon>
        <taxon>Feliformia</taxon>
        <taxon>Felidae</taxon>
        <taxon>Felinae</taxon>
        <taxon>Felis</taxon>
    </lineage>
</organism>
<gene>
    <name type="primary">GLB1</name>
    <name type="synonym">BGAL</name>
</gene>
<protein>
    <recommendedName>
        <fullName>Beta-galactosidase</fullName>
        <ecNumber evidence="2">3.2.1.23</ecNumber>
    </recommendedName>
    <alternativeName>
        <fullName>Acid beta-galactosidase</fullName>
        <shortName>Lactase</shortName>
    </alternativeName>
</protein>
<name>BGAL_FELCA</name>
<sequence>MDFPGAARLLSLLLVPLLLGPARGLRNASQRTFKIDYGHNRFLKDGQPFRYISGSIHYFRVPRFYWKDRLLKMKMAGLNAIQTYVPWNFHEPQPGQYQFSGEHDVEYFLKLAHELGLLVILRPGPYICAEWDMGGLPAWLLLKESIILRSSDPDYLAAVDKWLGVLLPKMKPLLYQNGGPIITVQVENEYGSYFTCDYDYLRFLQRRFRDHLGGDVLLFTTDGAHEKFLQCGALQGIYATVDFGPDANITAAFQIQRKSEPRGPLVNSEFYTGWLDHWGQPHSRVRTEVVASSLHDVLAHGANVNLYMFIGGTNFAYWNGANIPYQPQPTSYDYDAPLSEAGDLTDKYFALRDVIRKFEKVPEGFIPPSTPKFAYGKVALQKLKTVEDALNVLCPAGPIKSLYPLTFIQVKQYFGFVLYRTTLPQDCSNPTPLSSPLNGVRDRAYVAVDGVPQGVLERSYVITLNITGQAGATLDLLVENMGRVNYGRYINDFKGLISNLTLGSSVLTDWMIFPLDTEDAVRSHLGGWHGRNHGRQDNKAFAHHSSNYTLPAFYAGNFSIPSGIPDLPQDTFIQFSGWTKGQVWINGFNLGRYWPGRGPQVTLFVPRHILVTSAPNTIMVLELERAPCDDNGPELCTVEFVDRPLISATPTSSHPLPDLSDRDSGWDRV</sequence>
<reference key="1">
    <citation type="submission" date="1997-06" db="EMBL/GenBank/DDBJ databases">
        <title>The sequence of feline lysosomal beta-galactosidase.</title>
        <authorList>
            <person name="Varadarajan G.S."/>
            <person name="Smith B.F."/>
            <person name="Foureman P."/>
            <person name="Martin D.R."/>
            <person name="Varadarajan U."/>
            <person name="Georgeson M."/>
            <person name="Baker H.J."/>
        </authorList>
    </citation>
    <scope>NUCLEOTIDE SEQUENCE [MRNA]</scope>
</reference>
<reference key="2">
    <citation type="submission" date="1997-10" db="EMBL/GenBank/DDBJ databases">
        <title>The mutation in feline beta-galactosidase deficiency (GM1 gangliosidosis).</title>
        <authorList>
            <person name="Smith B.F."/>
            <person name="Foureman P."/>
            <person name="Georgeson M."/>
            <person name="Martin D.R."/>
            <person name="Baker H.J."/>
        </authorList>
    </citation>
    <scope>NUCLEOTIDE SEQUENCE [MRNA]</scope>
    <source>
        <tissue>Brain</tissue>
    </source>
</reference>
<proteinExistence type="evidence at transcript level"/>
<feature type="signal peptide" evidence="3">
    <location>
        <begin position="1"/>
        <end position="24"/>
    </location>
</feature>
<feature type="propeptide" id="PRO_0000012183" evidence="1">
    <location>
        <begin position="25"/>
        <end position="29"/>
    </location>
</feature>
<feature type="chain" id="PRO_0000012184" description="Beta-galactosidase">
    <location>
        <begin position="30"/>
        <end position="669"/>
    </location>
</feature>
<feature type="region of interest" description="Disordered" evidence="4">
    <location>
        <begin position="649"/>
        <end position="669"/>
    </location>
</feature>
<feature type="compositionally biased region" description="Basic and acidic residues" evidence="4">
    <location>
        <begin position="659"/>
        <end position="669"/>
    </location>
</feature>
<feature type="active site" description="Proton donor" evidence="2">
    <location>
        <position position="189"/>
    </location>
</feature>
<feature type="active site" description="Nucleophile" evidence="2">
    <location>
        <position position="269"/>
    </location>
</feature>
<feature type="binding site" evidence="2">
    <location>
        <position position="84"/>
    </location>
    <ligand>
        <name>substrate</name>
    </ligand>
</feature>
<feature type="binding site" evidence="2">
    <location>
        <position position="130"/>
    </location>
    <ligand>
        <name>substrate</name>
    </ligand>
</feature>
<feature type="binding site" evidence="2">
    <location>
        <position position="188"/>
    </location>
    <ligand>
        <name>substrate</name>
    </ligand>
</feature>
<feature type="binding site" evidence="2">
    <location>
        <position position="334"/>
    </location>
    <ligand>
        <name>substrate</name>
    </ligand>
</feature>
<feature type="glycosylation site" description="N-linked (GlcNAc...) asparagine" evidence="3">
    <location>
        <position position="27"/>
    </location>
</feature>
<feature type="glycosylation site" description="N-linked (GlcNAc...) asparagine" evidence="3">
    <location>
        <position position="248"/>
    </location>
</feature>
<feature type="glycosylation site" description="N-linked (GlcNAc...) asparagine" evidence="3">
    <location>
        <position position="465"/>
    </location>
</feature>
<feature type="glycosylation site" description="N-linked (GlcNAc...) asparagine" evidence="3">
    <location>
        <position position="499"/>
    </location>
</feature>
<feature type="glycosylation site" description="N-linked (GlcNAc...) asparagine" evidence="3">
    <location>
        <position position="547"/>
    </location>
</feature>
<feature type="glycosylation site" description="N-linked (GlcNAc...) asparagine" evidence="3">
    <location>
        <position position="557"/>
    </location>
</feature>
<feature type="disulfide bond" evidence="2">
    <location>
        <begin position="196"/>
        <end position="231"/>
    </location>
</feature>
<feature type="disulfide bond" evidence="2">
    <location>
        <begin position="628"/>
        <end position="636"/>
    </location>
</feature>
<feature type="sequence conflict" description="In Ref. 2; AAB86405." evidence="5" ref="2">
    <original>R</original>
    <variation>P</variation>
    <location>
        <position position="483"/>
    </location>
</feature>